<protein>
    <recommendedName>
        <fullName>Type II secretion system protein K</fullName>
        <shortName>T2SS protein K</shortName>
    </recommendedName>
    <alternativeName>
        <fullName>General secretion pathway protein K</fullName>
    </alternativeName>
</protein>
<comment type="function">
    <text evidence="3 4 5 6 7">Component of the type II secretion system required for the energy-dependent secretion of extracellular factors such as proteases and toxins from the periplasm (PubMed:30346996). Plays a role in pseudopilus assembly and seems to control its length (PubMed:16012171). Interacts with the pseudopilus tip complex that is critical for the recognition and binding of secretion substrates (PubMed:19828448, PubMed:9466253). Type II pseudopilus confers increased bacterial adhesive capabilities (PubMed:12700254).</text>
</comment>
<comment type="subunit">
    <text evidence="4 5 6">Type II secretion is composed of four main components: the outer membrane complex, the inner membrane complex, the cytoplasmic secretion ATPase and the periplasm-spanning pseudopilus. Interacts with the tip of the type II pseudopilus subunits XcpV, XcpU and XcpW (PubMed:19828448, PubMed:30346996). Interacts with core component XcpT (PubMed:16012171).</text>
</comment>
<comment type="subcellular location">
    <subcellularLocation>
        <location evidence="8">Cell inner membrane</location>
    </subcellularLocation>
</comment>
<comment type="PTM">
    <text evidence="7">Cleaved by prepilin peptidase.</text>
</comment>
<comment type="similarity">
    <text evidence="8">Belongs to the GSP K family.</text>
</comment>
<accession>Q00518</accession>
<sequence length="333" mass="37000">MRRGQNGVALITVLLVVAVVTIVCAGLIIRQQLAIRSSANQLHVRQAWHYALGGERLAEAVLRRDLRQGGENTREPVDHLGEAWARPMTPFKLDDGGELRVRIEDPSGRFNLNGLVRKRKVKPDSVKQFRRLLATLGMKEEIVQGLPDRLADWLDADQNPQGEQGAEDNQYLLEAPAYRAANRSFKDVSELRLLKLSEADYRRLLPFVSALPEDAPLNVNTASVPVLAAMFEIDPGQAENIVDARGREGFQSKDDFTKHLTQLGSKTGNVSYAVGTRYFQVISEVSLGDRRQVLVSTLQRGKDGKIRVMARDMGQGGLPIPSTGGDDWKKDER</sequence>
<proteinExistence type="evidence at protein level"/>
<gene>
    <name type="primary">xcpX</name>
    <name type="ordered locus">PA3097</name>
</gene>
<reference key="1">
    <citation type="journal article" date="1992" name="Mol. Microbiol.">
        <title>Protein secretion in Pseudomonas aeruginosa: characterization of seven xcp genes and processing of secretory apparatus components by prepilin peptidase.</title>
        <authorList>
            <person name="Bally M."/>
            <person name="Filloux A."/>
            <person name="Akrim M."/>
            <person name="Ball G."/>
            <person name="Lazdunski A."/>
            <person name="Tommassen J."/>
        </authorList>
    </citation>
    <scope>NUCLEOTIDE SEQUENCE [GENOMIC DNA]</scope>
    <source>
        <strain>ATCC 15692 / DSM 22644 / CIP 104116 / JCM 14847 / LMG 12228 / 1C / PRS 101 / PAO1</strain>
    </source>
</reference>
<reference key="2">
    <citation type="journal article" date="2000" name="Nature">
        <title>Complete genome sequence of Pseudomonas aeruginosa PAO1, an opportunistic pathogen.</title>
        <authorList>
            <person name="Stover C.K."/>
            <person name="Pham X.-Q.T."/>
            <person name="Erwin A.L."/>
            <person name="Mizoguchi S.D."/>
            <person name="Warrener P."/>
            <person name="Hickey M.J."/>
            <person name="Brinkman F.S.L."/>
            <person name="Hufnagle W.O."/>
            <person name="Kowalik D.J."/>
            <person name="Lagrou M."/>
            <person name="Garber R.L."/>
            <person name="Goltry L."/>
            <person name="Tolentino E."/>
            <person name="Westbrock-Wadman S."/>
            <person name="Yuan Y."/>
            <person name="Brody L.L."/>
            <person name="Coulter S.N."/>
            <person name="Folger K.R."/>
            <person name="Kas A."/>
            <person name="Larbig K."/>
            <person name="Lim R.M."/>
            <person name="Smith K.A."/>
            <person name="Spencer D.H."/>
            <person name="Wong G.K.-S."/>
            <person name="Wu Z."/>
            <person name="Paulsen I.T."/>
            <person name="Reizer J."/>
            <person name="Saier M.H. Jr."/>
            <person name="Hancock R.E.W."/>
            <person name="Lory S."/>
            <person name="Olson M.V."/>
        </authorList>
    </citation>
    <scope>NUCLEOTIDE SEQUENCE [LARGE SCALE GENOMIC DNA]</scope>
    <source>
        <strain>ATCC 15692 / DSM 22644 / CIP 104116 / JCM 14847 / LMG 12228 / 1C / PRS 101 / PAO1</strain>
    </source>
</reference>
<reference key="3">
    <citation type="journal article" date="1998" name="Mol. Microbiol.">
        <title>The secretion apparatus of Pseudomonas aeruginosa: identification of a fifth pseudopilin, XcpX (GspK family).</title>
        <authorList>
            <person name="Bleves S."/>
            <person name="Voulhoux R."/>
            <person name="Michel G."/>
            <person name="Lazdunski A."/>
            <person name="Tommassen J."/>
            <person name="Filloux A."/>
        </authorList>
    </citation>
    <scope>FUNCTION</scope>
    <scope>MUTAGENESIS OF GLY-7</scope>
    <scope>CLEAVAGE BY PREPILIN PEPTIDASE</scope>
</reference>
<reference key="4">
    <citation type="journal article" date="2003" name="J. Bacteriol.">
        <title>Type II protein secretion in Pseudomonas aeruginosa: the pseudopilus is a multifibrillar and adhesive structure.</title>
        <authorList>
            <person name="Durand E."/>
            <person name="Bernadac A."/>
            <person name="Ball G."/>
            <person name="Lazdunski A."/>
            <person name="Sturgis J.N."/>
            <person name="Filloux A."/>
        </authorList>
    </citation>
    <scope>FUNCTION</scope>
    <source>
        <strain>ATCC 15692 / DSM 22644 / CIP 104116 / JCM 14847 / LMG 12228 / 1C / PRS 101 / PAO1</strain>
    </source>
</reference>
<reference key="5">
    <citation type="journal article" date="2005" name="J. Biol. Chem.">
        <title>XcpX controls biogenesis of the Pseudomonas aeruginosa XcpT-containing pseudopilus.</title>
        <authorList>
            <person name="Durand E."/>
            <person name="Michel G."/>
            <person name="Voulhoux R."/>
            <person name="Kuerner J."/>
            <person name="Bernadac A."/>
            <person name="Filloux A."/>
        </authorList>
    </citation>
    <scope>FUNCTION</scope>
    <scope>INTERACTION WITH XCPT</scope>
</reference>
<reference key="6">
    <citation type="journal article" date="2009" name="J. Biol. Chem.">
        <title>The XcpV/GspI pseudopilin has a central role in the assembly of a quaternary complex within the T2SS pseudopilus.</title>
        <authorList>
            <person name="Douzi B."/>
            <person name="Durand E."/>
            <person name="Bernard C."/>
            <person name="Alphonse S."/>
            <person name="Cambillau C."/>
            <person name="Filloux A."/>
            <person name="Tegoni M."/>
            <person name="Voulhoux R."/>
        </authorList>
    </citation>
    <scope>FUNCTION</scope>
    <scope>INTERACTION WITH XCPV; XCPW AMD XCPU</scope>
</reference>
<reference key="7">
    <citation type="journal article" date="2018" name="PLoS Pathog.">
        <title>Structure-guided disruption of the pseudopilus tip complex inhibits the Type II secretion in Pseudomonas aeruginosa.</title>
        <authorList>
            <person name="Zhang Y."/>
            <person name="Faucher F."/>
            <person name="Zhang W."/>
            <person name="Wang S."/>
            <person name="Neville N."/>
            <person name="Poole K."/>
            <person name="Zheng J."/>
            <person name="Jia Z."/>
        </authorList>
    </citation>
    <scope>X-RAY CRYSTALLOGRAPHY (2.04 ANGSTROMS) OF 44-316</scope>
    <scope>FUNCTION</scope>
</reference>
<dbReference type="EMBL" id="X62666">
    <property type="protein sequence ID" value="CAA44539.1"/>
    <property type="molecule type" value="Genomic_DNA"/>
</dbReference>
<dbReference type="EMBL" id="AE004091">
    <property type="protein sequence ID" value="AAG06485.1"/>
    <property type="molecule type" value="Genomic_DNA"/>
</dbReference>
<dbReference type="PIR" id="S25390">
    <property type="entry name" value="SKPSXX"/>
</dbReference>
<dbReference type="RefSeq" id="NP_251787.1">
    <property type="nucleotide sequence ID" value="NC_002516.2"/>
</dbReference>
<dbReference type="RefSeq" id="WP_003103524.1">
    <property type="nucleotide sequence ID" value="NZ_QZGE01000009.1"/>
</dbReference>
<dbReference type="PDB" id="5VTM">
    <property type="method" value="X-ray"/>
    <property type="resolution" value="2.04 A"/>
    <property type="chains" value="X=44-316"/>
</dbReference>
<dbReference type="PDB" id="6UTU">
    <property type="method" value="X-ray"/>
    <property type="resolution" value="2.85 A"/>
    <property type="chains" value="C/F/I=44-316"/>
</dbReference>
<dbReference type="PDBsum" id="5VTM"/>
<dbReference type="PDBsum" id="6UTU"/>
<dbReference type="SMR" id="Q00518"/>
<dbReference type="FunCoup" id="Q00518">
    <property type="interactions" value="49"/>
</dbReference>
<dbReference type="STRING" id="208964.PA3097"/>
<dbReference type="PaxDb" id="208964-PA3097"/>
<dbReference type="DNASU" id="882779"/>
<dbReference type="GeneID" id="882779"/>
<dbReference type="KEGG" id="pae:PA3097"/>
<dbReference type="PATRIC" id="fig|208964.12.peg.3249"/>
<dbReference type="PseudoCAP" id="PA3097"/>
<dbReference type="HOGENOM" id="CLU_057294_1_0_6"/>
<dbReference type="InParanoid" id="Q00518"/>
<dbReference type="OrthoDB" id="5293133at2"/>
<dbReference type="PhylomeDB" id="Q00518"/>
<dbReference type="BioCyc" id="PAER208964:G1FZ6-3153-MONOMER"/>
<dbReference type="Proteomes" id="UP000002438">
    <property type="component" value="Chromosome"/>
</dbReference>
<dbReference type="GO" id="GO:0005886">
    <property type="term" value="C:plasma membrane"/>
    <property type="evidence" value="ECO:0007669"/>
    <property type="project" value="UniProtKB-SubCell"/>
</dbReference>
<dbReference type="GO" id="GO:0015627">
    <property type="term" value="C:type II protein secretion system complex"/>
    <property type="evidence" value="ECO:0000314"/>
    <property type="project" value="PseudoCAP"/>
</dbReference>
<dbReference type="GO" id="GO:0015628">
    <property type="term" value="P:protein secretion by the type II secretion system"/>
    <property type="evidence" value="ECO:0000314"/>
    <property type="project" value="PseudoCAP"/>
</dbReference>
<dbReference type="Gene3D" id="1.10.40.60">
    <property type="entry name" value="EpsJ-like"/>
    <property type="match status" value="2"/>
</dbReference>
<dbReference type="Gene3D" id="3.30.1300.30">
    <property type="entry name" value="GSPII I/J protein-like"/>
    <property type="match status" value="1"/>
</dbReference>
<dbReference type="InterPro" id="IPR005628">
    <property type="entry name" value="GspK"/>
</dbReference>
<dbReference type="InterPro" id="IPR038072">
    <property type="entry name" value="GspK_central_sf"/>
</dbReference>
<dbReference type="InterPro" id="IPR045584">
    <property type="entry name" value="Pilin-like"/>
</dbReference>
<dbReference type="InterPro" id="IPR049031">
    <property type="entry name" value="T2SSK_SAM-like_1st"/>
</dbReference>
<dbReference type="InterPro" id="IPR049179">
    <property type="entry name" value="T2SSK_SAM-like_2nd"/>
</dbReference>
<dbReference type="NCBIfam" id="NF037980">
    <property type="entry name" value="T2SS_GspK"/>
    <property type="match status" value="1"/>
</dbReference>
<dbReference type="PANTHER" id="PTHR38831">
    <property type="entry name" value="TYPE II SECRETION SYSTEM PROTEIN K"/>
    <property type="match status" value="1"/>
</dbReference>
<dbReference type="PANTHER" id="PTHR38831:SF1">
    <property type="entry name" value="TYPE II SECRETION SYSTEM PROTEIN K-RELATED"/>
    <property type="match status" value="1"/>
</dbReference>
<dbReference type="Pfam" id="PF03934">
    <property type="entry name" value="T2SSK"/>
    <property type="match status" value="1"/>
</dbReference>
<dbReference type="Pfam" id="PF21687">
    <property type="entry name" value="T2SSK_1st"/>
    <property type="match status" value="1"/>
</dbReference>
<dbReference type="PIRSF" id="PIRSF002786">
    <property type="entry name" value="XcpX"/>
    <property type="match status" value="1"/>
</dbReference>
<dbReference type="SUPFAM" id="SSF158544">
    <property type="entry name" value="GspK insert domain-like"/>
    <property type="match status" value="2"/>
</dbReference>
<dbReference type="SUPFAM" id="SSF54523">
    <property type="entry name" value="Pili subunits"/>
    <property type="match status" value="1"/>
</dbReference>
<keyword id="KW-0002">3D-structure</keyword>
<keyword id="KW-0997">Cell inner membrane</keyword>
<keyword id="KW-1003">Cell membrane</keyword>
<keyword id="KW-0472">Membrane</keyword>
<keyword id="KW-0653">Protein transport</keyword>
<keyword id="KW-1185">Reference proteome</keyword>
<keyword id="KW-0812">Transmembrane</keyword>
<keyword id="KW-1133">Transmembrane helix</keyword>
<keyword id="KW-0813">Transport</keyword>
<organism>
    <name type="scientific">Pseudomonas aeruginosa (strain ATCC 15692 / DSM 22644 / CIP 104116 / JCM 14847 / LMG 12228 / 1C / PRS 101 / PAO1)</name>
    <dbReference type="NCBI Taxonomy" id="208964"/>
    <lineage>
        <taxon>Bacteria</taxon>
        <taxon>Pseudomonadati</taxon>
        <taxon>Pseudomonadota</taxon>
        <taxon>Gammaproteobacteria</taxon>
        <taxon>Pseudomonadales</taxon>
        <taxon>Pseudomonadaceae</taxon>
        <taxon>Pseudomonas</taxon>
    </lineage>
</organism>
<name>GSPK_PSEAE</name>
<evidence type="ECO:0000255" key="1"/>
<evidence type="ECO:0000256" key="2">
    <source>
        <dbReference type="SAM" id="MobiDB-lite"/>
    </source>
</evidence>
<evidence type="ECO:0000269" key="3">
    <source>
    </source>
</evidence>
<evidence type="ECO:0000269" key="4">
    <source>
    </source>
</evidence>
<evidence type="ECO:0000269" key="5">
    <source>
    </source>
</evidence>
<evidence type="ECO:0000269" key="6">
    <source>
    </source>
</evidence>
<evidence type="ECO:0000269" key="7">
    <source>
    </source>
</evidence>
<evidence type="ECO:0000305" key="8"/>
<evidence type="ECO:0007829" key="9">
    <source>
        <dbReference type="PDB" id="5VTM"/>
    </source>
</evidence>
<evidence type="ECO:0007829" key="10">
    <source>
        <dbReference type="PDB" id="6UTU"/>
    </source>
</evidence>
<feature type="propeptide" id="PRO_0000449562" description="Leader sequence" evidence="7">
    <location>
        <begin position="1"/>
        <end position="7"/>
    </location>
</feature>
<feature type="chain" id="PRO_0000449563" description="Type II secretion system protein K">
    <location>
        <begin position="8"/>
        <end position="333"/>
    </location>
</feature>
<feature type="transmembrane region" description="Helical" evidence="1">
    <location>
        <begin position="8"/>
        <end position="29"/>
    </location>
</feature>
<feature type="topological domain" description="Periplasmic" evidence="1">
    <location>
        <begin position="30"/>
        <end position="333"/>
    </location>
</feature>
<feature type="region of interest" description="Disordered" evidence="2">
    <location>
        <begin position="313"/>
        <end position="333"/>
    </location>
</feature>
<feature type="mutagenesis site" description="Complete loss of secretion." evidence="7">
    <original>G</original>
    <variation>V</variation>
    <location>
        <position position="7"/>
    </location>
</feature>
<feature type="helix" evidence="9">
    <location>
        <begin position="45"/>
        <end position="65"/>
    </location>
</feature>
<feature type="helix" evidence="9">
    <location>
        <begin position="83"/>
        <end position="85"/>
    </location>
</feature>
<feature type="strand" evidence="9">
    <location>
        <begin position="98"/>
        <end position="104"/>
    </location>
</feature>
<feature type="helix" evidence="9">
    <location>
        <begin position="106"/>
        <end position="108"/>
    </location>
</feature>
<feature type="strand" evidence="9">
    <location>
        <begin position="109"/>
        <end position="111"/>
    </location>
</feature>
<feature type="helix" evidence="9">
    <location>
        <begin position="112"/>
        <end position="115"/>
    </location>
</feature>
<feature type="helix" evidence="9">
    <location>
        <begin position="123"/>
        <end position="135"/>
    </location>
</feature>
<feature type="helix" evidence="9">
    <location>
        <begin position="140"/>
        <end position="154"/>
    </location>
</feature>
<feature type="strand" evidence="9">
    <location>
        <begin position="155"/>
        <end position="157"/>
    </location>
</feature>
<feature type="helix" evidence="9">
    <location>
        <begin position="162"/>
        <end position="164"/>
    </location>
</feature>
<feature type="helix" evidence="9">
    <location>
        <begin position="168"/>
        <end position="171"/>
    </location>
</feature>
<feature type="strand" evidence="9">
    <location>
        <begin position="174"/>
        <end position="176"/>
    </location>
</feature>
<feature type="helix" evidence="9">
    <location>
        <begin position="188"/>
        <end position="193"/>
    </location>
</feature>
<feature type="helix" evidence="9">
    <location>
        <begin position="198"/>
        <end position="204"/>
    </location>
</feature>
<feature type="helix" evidence="9">
    <location>
        <begin position="205"/>
        <end position="207"/>
    </location>
</feature>
<feature type="turn" evidence="9">
    <location>
        <begin position="219"/>
        <end position="221"/>
    </location>
</feature>
<feature type="helix" evidence="9">
    <location>
        <begin position="224"/>
        <end position="230"/>
    </location>
</feature>
<feature type="helix" evidence="9">
    <location>
        <begin position="235"/>
        <end position="245"/>
    </location>
</feature>
<feature type="turn" evidence="9">
    <location>
        <begin position="246"/>
        <end position="248"/>
    </location>
</feature>
<feature type="helix" evidence="9">
    <location>
        <begin position="253"/>
        <end position="261"/>
    </location>
</feature>
<feature type="turn" evidence="10">
    <location>
        <begin position="262"/>
        <end position="264"/>
    </location>
</feature>
<feature type="strand" evidence="9">
    <location>
        <begin position="272"/>
        <end position="275"/>
    </location>
</feature>
<feature type="strand" evidence="9">
    <location>
        <begin position="277"/>
        <end position="287"/>
    </location>
</feature>
<feature type="strand" evidence="9">
    <location>
        <begin position="290"/>
        <end position="300"/>
    </location>
</feature>
<feature type="strand" evidence="9">
    <location>
        <begin position="306"/>
        <end position="312"/>
    </location>
</feature>